<sequence>MTISTPEREAKKVKIAVDRNPVETSFEKWAKPGHFSRTLSKGPNTTTWIWNLHADAHDFDSHTSDLEEISRKVFSAHFGQLGIIFIWLSGMYFHGARFSNYEAWLSDPTHIKPSAQVVWPIVGQEILNGDVGGGFQGIQITSGFFQLWRASGITSELQLYTTAIGGLVMAAAMFFAGWFHYHKAAPKLEWFQNVESMLNHHLGGLLGLGSLAWAGHQIHVSLPVNKLLDAGVDPKEIPLPHDLLLNRAIMADLYPSFAKGIAPFFTLNWSEYSDFLTFKGGLNPVTGGLWLSDTAHHHVAIAVLFLVAGHMYRTNWGIGHSMKEILEAHRGPFTGEGHVGLYEILTTSWHAQLAINLALFGSLSIIVAHHMYAMPPYPYLATDYGTQLSLFTHHTWIGGFCIVGAGAHAAIFMVRDYDPTNNYNNLLDRVIRHRDAIISHLNWVCIFLGFHSFGLYIHNDTMSALGRPQDMFSDTAIQLQPVFAQWIQNTHFLAPQLTAPNALAATSLTWGGDLVAVGGKVAMMPISLGTSDFMVHHIHAFTIHVTVLILLKGVLFARSSRLIPDKANLGFRFPCDGPGRGGTCQVSAWDHVFLGLFWMYNSLSIVIFHFSWKMQSDVWGTVTASGVSHITGGNFAQSANTINGWLRDFLWAQSSQVIQSYGSALSAYGLIFLGAHFVWAFSLMFLFSGRGYWQELIESIVWAHNKLKVAPAIQPRALSITQGRAVGVAHYLLGGIATTWSFFLARIISVG</sequence>
<proteinExistence type="evidence at protein level"/>
<gene>
    <name type="primary">psaA</name>
    <name type="synonym">ps1a1</name>
</gene>
<feature type="chain" id="PRO_0000088539" description="Photosystem I P700 chlorophyll a apoprotein A1">
    <location>
        <begin position="1"/>
        <end position="751"/>
    </location>
</feature>
<feature type="transmembrane region" description="Helical; Name=I" evidence="2">
    <location>
        <begin position="73"/>
        <end position="96"/>
    </location>
</feature>
<feature type="transmembrane region" description="Helical; Name=II" evidence="2">
    <location>
        <begin position="159"/>
        <end position="182"/>
    </location>
</feature>
<feature type="transmembrane region" description="Helical; Name=III" evidence="2">
    <location>
        <begin position="198"/>
        <end position="222"/>
    </location>
</feature>
<feature type="transmembrane region" description="Helical; Name=IV" evidence="2">
    <location>
        <begin position="294"/>
        <end position="312"/>
    </location>
</feature>
<feature type="transmembrane region" description="Helical; Name=V" evidence="2">
    <location>
        <begin position="349"/>
        <end position="372"/>
    </location>
</feature>
<feature type="transmembrane region" description="Helical; Name=VI" evidence="2">
    <location>
        <begin position="388"/>
        <end position="414"/>
    </location>
</feature>
<feature type="transmembrane region" description="Helical; Name=VII" evidence="2">
    <location>
        <begin position="436"/>
        <end position="458"/>
    </location>
</feature>
<feature type="transmembrane region" description="Helical; Name=VIII" evidence="2">
    <location>
        <begin position="533"/>
        <end position="551"/>
    </location>
</feature>
<feature type="transmembrane region" description="Helical; Name=IX" evidence="2">
    <location>
        <begin position="591"/>
        <end position="612"/>
    </location>
</feature>
<feature type="transmembrane region" description="Helical; Name=X" evidence="2">
    <location>
        <begin position="665"/>
        <end position="687"/>
    </location>
</feature>
<feature type="transmembrane region" description="Helical; Name=XI" evidence="2">
    <location>
        <begin position="725"/>
        <end position="745"/>
    </location>
</feature>
<feature type="binding site" evidence="1">
    <location>
        <position position="575"/>
    </location>
    <ligand>
        <name>[4Fe-4S] cluster</name>
        <dbReference type="ChEBI" id="CHEBI:49883"/>
        <note>ligand shared between dimeric partners</note>
    </ligand>
</feature>
<feature type="binding site" evidence="1">
    <location>
        <position position="584"/>
    </location>
    <ligand>
        <name>[4Fe-4S] cluster</name>
        <dbReference type="ChEBI" id="CHEBI:49883"/>
        <note>ligand shared between dimeric partners</note>
    </ligand>
</feature>
<feature type="binding site" description="axial binding residue">
    <location>
        <position position="676"/>
    </location>
    <ligand>
        <name>chlorophyll a'</name>
        <dbReference type="ChEBI" id="CHEBI:189419"/>
        <label>A1</label>
    </ligand>
    <ligandPart>
        <name>Mg</name>
        <dbReference type="ChEBI" id="CHEBI:25107"/>
    </ligandPart>
</feature>
<feature type="binding site" description="axial binding residue" evidence="1">
    <location>
        <position position="684"/>
    </location>
    <ligand>
        <name>chlorophyll a</name>
        <dbReference type="ChEBI" id="CHEBI:58416"/>
        <label>A3</label>
    </ligand>
    <ligandPart>
        <name>Mg</name>
        <dbReference type="ChEBI" id="CHEBI:25107"/>
    </ligandPart>
</feature>
<feature type="binding site" evidence="1">
    <location>
        <position position="692"/>
    </location>
    <ligand>
        <name>chlorophyll a</name>
        <dbReference type="ChEBI" id="CHEBI:58416"/>
        <label>A3</label>
    </ligand>
</feature>
<feature type="binding site">
    <location>
        <position position="693"/>
    </location>
    <ligand>
        <name>phylloquinone</name>
        <dbReference type="ChEBI" id="CHEBI:18067"/>
        <label>A</label>
    </ligand>
</feature>
<feature type="mutagenesis site" description="No PSI detected." evidence="3">
    <original>H</original>
    <variation>C</variation>
    <location>
        <position position="676"/>
    </location>
</feature>
<feature type="mutagenesis site" description="Loss of P700 function." evidence="3">
    <original>H</original>
    <variation>F</variation>
    <variation>L</variation>
    <location>
        <position position="676"/>
    </location>
</feature>
<feature type="mutagenesis site" description="Impairment of P700 function. More severe; when associated with 'Q-656' in PsaB." evidence="3">
    <original>H</original>
    <variation>Q</variation>
    <location>
        <position position="676"/>
    </location>
</feature>
<feature type="mutagenesis site" description="Accumulates approximately 50% PSI." evidence="3">
    <original>H</original>
    <variation>S</variation>
    <location>
        <position position="676"/>
    </location>
</feature>
<feature type="mutagenesis site" description="Unable to photoaccumulate an electron on A1.">
    <original>W</original>
    <variation>F</variation>
    <location>
        <position position="693"/>
    </location>
</feature>
<feature type="sequence conflict" description="In Ref. 1; CAA29286." evidence="4" ref="1">
    <original>D</original>
    <variation>E</variation>
    <location>
        <position position="513"/>
    </location>
</feature>
<feature type="sequence conflict" description="In Ref. 1; CAA29286." evidence="4" ref="1">
    <original>V</original>
    <variation>G</variation>
    <location>
        <position position="515"/>
    </location>
</feature>
<feature type="sequence conflict" description="In Ref. 1; CAA29286." evidence="4" ref="1">
    <original>V</original>
    <variation>H</variation>
    <location>
        <position position="517"/>
    </location>
</feature>
<feature type="strand" evidence="9">
    <location>
        <begin position="17"/>
        <end position="20"/>
    </location>
</feature>
<feature type="helix" evidence="9">
    <location>
        <begin position="28"/>
        <end position="30"/>
    </location>
</feature>
<feature type="turn" evidence="9">
    <location>
        <begin position="32"/>
        <end position="35"/>
    </location>
</feature>
<feature type="turn" evidence="9">
    <location>
        <begin position="37"/>
        <end position="41"/>
    </location>
</feature>
<feature type="helix" evidence="9">
    <location>
        <begin position="47"/>
        <end position="54"/>
    </location>
</feature>
<feature type="turn" evidence="9">
    <location>
        <begin position="55"/>
        <end position="57"/>
    </location>
</feature>
<feature type="helix" evidence="9">
    <location>
        <begin position="59"/>
        <end position="62"/>
    </location>
</feature>
<feature type="helix" evidence="9">
    <location>
        <begin position="66"/>
        <end position="97"/>
    </location>
</feature>
<feature type="helix" evidence="9">
    <location>
        <begin position="101"/>
        <end position="106"/>
    </location>
</feature>
<feature type="turn" evidence="9">
    <location>
        <begin position="108"/>
        <end position="110"/>
    </location>
</feature>
<feature type="strand" evidence="9">
    <location>
        <begin position="114"/>
        <end position="116"/>
    </location>
</feature>
<feature type="strand" evidence="8">
    <location>
        <begin position="121"/>
        <end position="123"/>
    </location>
</feature>
<feature type="helix" evidence="9">
    <location>
        <begin position="124"/>
        <end position="127"/>
    </location>
</feature>
<feature type="strand" evidence="9">
    <location>
        <begin position="128"/>
        <end position="132"/>
    </location>
</feature>
<feature type="strand" evidence="9">
    <location>
        <begin position="135"/>
        <end position="139"/>
    </location>
</feature>
<feature type="helix" evidence="9">
    <location>
        <begin position="144"/>
        <end position="151"/>
    </location>
</feature>
<feature type="helix" evidence="9">
    <location>
        <begin position="156"/>
        <end position="182"/>
    </location>
</feature>
<feature type="strand" evidence="9">
    <location>
        <begin position="184"/>
        <end position="186"/>
    </location>
</feature>
<feature type="helix" evidence="9">
    <location>
        <begin position="188"/>
        <end position="191"/>
    </location>
</feature>
<feature type="helix" evidence="9">
    <location>
        <begin position="194"/>
        <end position="203"/>
    </location>
</feature>
<feature type="helix" evidence="9">
    <location>
        <begin position="205"/>
        <end position="219"/>
    </location>
</feature>
<feature type="helix" evidence="9">
    <location>
        <begin position="221"/>
        <end position="229"/>
    </location>
</feature>
<feature type="turn" evidence="9">
    <location>
        <begin position="234"/>
        <end position="236"/>
    </location>
</feature>
<feature type="helix" evidence="9">
    <location>
        <begin position="240"/>
        <end position="245"/>
    </location>
</feature>
<feature type="helix" evidence="9">
    <location>
        <begin position="247"/>
        <end position="253"/>
    </location>
</feature>
<feature type="helix" evidence="9">
    <location>
        <begin position="255"/>
        <end position="259"/>
    </location>
</feature>
<feature type="helix" evidence="9">
    <location>
        <begin position="262"/>
        <end position="265"/>
    </location>
</feature>
<feature type="helix" evidence="9">
    <location>
        <begin position="269"/>
        <end position="274"/>
    </location>
</feature>
<feature type="turn" evidence="9">
    <location>
        <begin position="284"/>
        <end position="286"/>
    </location>
</feature>
<feature type="helix" evidence="9">
    <location>
        <begin position="291"/>
        <end position="308"/>
    </location>
</feature>
<feature type="strand" evidence="9">
    <location>
        <begin position="315"/>
        <end position="317"/>
    </location>
</feature>
<feature type="helix" evidence="9">
    <location>
        <begin position="322"/>
        <end position="328"/>
    </location>
</feature>
<feature type="turn" evidence="8">
    <location>
        <begin position="332"/>
        <end position="336"/>
    </location>
</feature>
<feature type="helix" evidence="9">
    <location>
        <begin position="341"/>
        <end position="347"/>
    </location>
</feature>
<feature type="helix" evidence="9">
    <location>
        <begin position="349"/>
        <end position="373"/>
    </location>
</feature>
<feature type="helix" evidence="9">
    <location>
        <begin position="384"/>
        <end position="415"/>
    </location>
</feature>
<feature type="helix" evidence="9">
    <location>
        <begin position="419"/>
        <end position="421"/>
    </location>
</feature>
<feature type="strand" evidence="9">
    <location>
        <begin position="423"/>
        <end position="425"/>
    </location>
</feature>
<feature type="helix" evidence="9">
    <location>
        <begin position="426"/>
        <end position="432"/>
    </location>
</feature>
<feature type="helix" evidence="9">
    <location>
        <begin position="434"/>
        <end position="464"/>
    </location>
</feature>
<feature type="helix" evidence="9">
    <location>
        <begin position="468"/>
        <end position="470"/>
    </location>
</feature>
<feature type="strand" evidence="9">
    <location>
        <begin position="471"/>
        <end position="477"/>
    </location>
</feature>
<feature type="helix" evidence="9">
    <location>
        <begin position="482"/>
        <end position="493"/>
    </location>
</feature>
<feature type="helix" evidence="9">
    <location>
        <begin position="494"/>
        <end position="496"/>
    </location>
</feature>
<feature type="strand" evidence="9">
    <location>
        <begin position="499"/>
        <end position="501"/>
    </location>
</feature>
<feature type="strand" evidence="5">
    <location>
        <begin position="508"/>
        <end position="512"/>
    </location>
</feature>
<feature type="strand" evidence="9">
    <location>
        <begin position="515"/>
        <end position="517"/>
    </location>
</feature>
<feature type="strand" evidence="9">
    <location>
        <begin position="520"/>
        <end position="523"/>
    </location>
</feature>
<feature type="helix" evidence="9">
    <location>
        <begin position="530"/>
        <end position="555"/>
    </location>
</feature>
<feature type="strand" evidence="10">
    <location>
        <begin position="556"/>
        <end position="558"/>
    </location>
</feature>
<feature type="helix" evidence="9">
    <location>
        <begin position="566"/>
        <end position="569"/>
    </location>
</feature>
<feature type="strand" evidence="6">
    <location>
        <begin position="574"/>
        <end position="576"/>
    </location>
</feature>
<feature type="helix" evidence="9">
    <location>
        <begin position="588"/>
        <end position="617"/>
    </location>
</feature>
<feature type="strand" evidence="9">
    <location>
        <begin position="620"/>
        <end position="623"/>
    </location>
</feature>
<feature type="strand" evidence="9">
    <location>
        <begin position="626"/>
        <end position="629"/>
    </location>
</feature>
<feature type="turn" evidence="9">
    <location>
        <begin position="630"/>
        <end position="633"/>
    </location>
</feature>
<feature type="helix" evidence="9">
    <location>
        <begin position="635"/>
        <end position="638"/>
    </location>
</feature>
<feature type="strand" evidence="9">
    <location>
        <begin position="639"/>
        <end position="641"/>
    </location>
</feature>
<feature type="helix" evidence="9">
    <location>
        <begin position="642"/>
        <end position="648"/>
    </location>
</feature>
<feature type="helix" evidence="9">
    <location>
        <begin position="650"/>
        <end position="653"/>
    </location>
</feature>
<feature type="helix" evidence="9">
    <location>
        <begin position="655"/>
        <end position="658"/>
    </location>
</feature>
<feature type="turn" evidence="7">
    <location>
        <begin position="661"/>
        <end position="665"/>
    </location>
</feature>
<feature type="helix" evidence="9">
    <location>
        <begin position="666"/>
        <end position="687"/>
    </location>
</feature>
<feature type="helix" evidence="9">
    <location>
        <begin position="690"/>
        <end position="706"/>
    </location>
</feature>
<feature type="strand" evidence="9">
    <location>
        <begin position="712"/>
        <end position="714"/>
    </location>
</feature>
<feature type="helix" evidence="9">
    <location>
        <begin position="720"/>
        <end position="750"/>
    </location>
</feature>
<organism>
    <name type="scientific">Chlamydomonas reinhardtii</name>
    <name type="common">Chlamydomonas smithii</name>
    <dbReference type="NCBI Taxonomy" id="3055"/>
    <lineage>
        <taxon>Eukaryota</taxon>
        <taxon>Viridiplantae</taxon>
        <taxon>Chlorophyta</taxon>
        <taxon>core chlorophytes</taxon>
        <taxon>Chlorophyceae</taxon>
        <taxon>CS clade</taxon>
        <taxon>Chlamydomonadales</taxon>
        <taxon>Chlamydomonadaceae</taxon>
        <taxon>Chlamydomonas</taxon>
    </lineage>
</organism>
<accession>P12154</accession>
<accession>B7U1G1</accession>
<accession>Q9GH91</accession>
<comment type="function">
    <text>PsaA and PsaB bind P700, the primary electron donor of photosystem I (PSI), as well as the electron acceptors A0, A1 and FX. PSI is a plastocyanin/cytochrome c6-ferredoxin oxidoreductase, converting photonic excitation into a charge separation, which transfers an electron from the donor P700 chlorophyll pair to the spectroscopically characterized acceptors A0, A1, FX, FA and FB in turn. Oxidized P700 is reduced on the lumenal side of the thylakoid membrane by plastocyanin or cytochrome c6.</text>
</comment>
<comment type="function">
    <text>Both potential cofactor branches in PSI seem to be active; however, electron transfer seems to proceed preferentially down the path including the phylloquinone bound by PsaA.</text>
</comment>
<comment type="catalytic activity">
    <reaction>
        <text>reduced [plastocyanin] + hnu + oxidized [2Fe-2S]-[ferredoxin] = oxidized [plastocyanin] + reduced [2Fe-2S]-[ferredoxin]</text>
        <dbReference type="Rhea" id="RHEA:30407"/>
        <dbReference type="Rhea" id="RHEA-COMP:10000"/>
        <dbReference type="Rhea" id="RHEA-COMP:10001"/>
        <dbReference type="Rhea" id="RHEA-COMP:10039"/>
        <dbReference type="Rhea" id="RHEA-COMP:10040"/>
        <dbReference type="ChEBI" id="CHEBI:29036"/>
        <dbReference type="ChEBI" id="CHEBI:30212"/>
        <dbReference type="ChEBI" id="CHEBI:33737"/>
        <dbReference type="ChEBI" id="CHEBI:33738"/>
        <dbReference type="ChEBI" id="CHEBI:49552"/>
        <dbReference type="EC" id="1.97.1.12"/>
    </reaction>
</comment>
<comment type="cofactor">
    <text evidence="1">P700 is a chlorophyll a/chlorophyll a' dimer, A0 is one or more chlorophyll a, A1 is one or both phylloquinones and FX is a shared 4Fe-4S iron-sulfur center.</text>
</comment>
<comment type="subunit">
    <text>The PsaA/B heterodimer binds the P700 chlorophyll special pair and subsequent electron acceptors. PSI consists of a core antenna complex that captures photons, and an electron transfer chain that converts photonic excitation into a charge separation. The eukaryotic PSI reaction center is composed of at least 11 subunits.</text>
</comment>
<comment type="interaction">
    <interactant intactId="EBI-601796">
        <id>P12154</id>
    </interactant>
    <interactant intactId="EBI-15762546">
        <id>Q84V18</id>
        <label>STT7</label>
    </interactant>
    <organismsDiffer>false</organismsDiffer>
    <experiments>4</experiments>
</comment>
<comment type="interaction">
    <interactant intactId="EBI-601796">
        <id>P12154</id>
    </interactant>
    <interactant intactId="EBI-601871">
        <id>O20031</id>
        <label>ycf3</label>
    </interactant>
    <organismsDiffer>false</organismsDiffer>
    <experiments>3</experiments>
</comment>
<comment type="subcellular location">
    <subcellularLocation>
        <location>Plastid</location>
        <location>Chloroplast thylakoid membrane</location>
        <topology>Multi-pass membrane protein</topology>
    </subcellularLocation>
</comment>
<comment type="similarity">
    <text evidence="4">Belongs to the PsaA/PsaB family.</text>
</comment>
<evidence type="ECO:0000250" key="1"/>
<evidence type="ECO:0000255" key="2"/>
<evidence type="ECO:0000269" key="3">
    <source>
    </source>
</evidence>
<evidence type="ECO:0000305" key="4"/>
<evidence type="ECO:0007829" key="5">
    <source>
        <dbReference type="PDB" id="7BGI"/>
    </source>
</evidence>
<evidence type="ECO:0007829" key="6">
    <source>
        <dbReference type="PDB" id="7BLX"/>
    </source>
</evidence>
<evidence type="ECO:0007829" key="7">
    <source>
        <dbReference type="PDB" id="7D0J"/>
    </source>
</evidence>
<evidence type="ECO:0007829" key="8">
    <source>
        <dbReference type="PDB" id="7DZ7"/>
    </source>
</evidence>
<evidence type="ECO:0007829" key="9">
    <source>
        <dbReference type="PDB" id="7R3K"/>
    </source>
</evidence>
<evidence type="ECO:0007829" key="10">
    <source>
        <dbReference type="PDB" id="8H2U"/>
    </source>
</evidence>
<dbReference type="EC" id="1.97.1.12"/>
<dbReference type="EMBL" id="X05845">
    <property type="protein sequence ID" value="CAA29286.1"/>
    <property type="molecule type" value="Genomic_DNA"/>
</dbReference>
<dbReference type="EMBL" id="X05846">
    <property type="protein sequence ID" value="CAA29286.1"/>
    <property type="status" value="JOINED"/>
    <property type="molecule type" value="Genomic_DNA"/>
</dbReference>
<dbReference type="EMBL" id="X05847">
    <property type="protein sequence ID" value="CAA29286.1"/>
    <property type="status" value="JOINED"/>
    <property type="molecule type" value="Genomic_DNA"/>
</dbReference>
<dbReference type="EMBL" id="FJ423446">
    <property type="protein sequence ID" value="ACJ50108.1"/>
    <property type="molecule type" value="Genomic_DNA"/>
</dbReference>
<dbReference type="EMBL" id="AB044419">
    <property type="protein sequence ID" value="BAB18345.1"/>
    <property type="molecule type" value="Genomic_DNA"/>
</dbReference>
<dbReference type="EMBL" id="BK000554">
    <property type="protein sequence ID" value="DAA01471.1"/>
    <property type="molecule type" value="Genomic_DNA"/>
</dbReference>
<dbReference type="PIR" id="A28341">
    <property type="entry name" value="A28341"/>
</dbReference>
<dbReference type="RefSeq" id="NP_958375.1">
    <property type="nucleotide sequence ID" value="NC_005353.1"/>
</dbReference>
<dbReference type="PDB" id="6IJJ">
    <property type="method" value="EM"/>
    <property type="resolution" value="2.89 A"/>
    <property type="chains" value="A=1-751"/>
</dbReference>
<dbReference type="PDB" id="6IJO">
    <property type="method" value="EM"/>
    <property type="resolution" value="3.30 A"/>
    <property type="chains" value="A=1-751"/>
</dbReference>
<dbReference type="PDB" id="6JO5">
    <property type="method" value="EM"/>
    <property type="resolution" value="2.90 A"/>
    <property type="chains" value="A=1-751"/>
</dbReference>
<dbReference type="PDB" id="6JO6">
    <property type="method" value="EM"/>
    <property type="resolution" value="2.90 A"/>
    <property type="chains" value="A=1-751"/>
</dbReference>
<dbReference type="PDB" id="7BGI">
    <property type="method" value="EM"/>
    <property type="resolution" value="2.54 A"/>
    <property type="chains" value="A=11-751"/>
</dbReference>
<dbReference type="PDB" id="7BLX">
    <property type="method" value="EM"/>
    <property type="resolution" value="3.15 A"/>
    <property type="chains" value="A=11-751"/>
</dbReference>
<dbReference type="PDB" id="7D0J">
    <property type="method" value="EM"/>
    <property type="resolution" value="3.42 A"/>
    <property type="chains" value="A=12-751"/>
</dbReference>
<dbReference type="PDB" id="7DZ7">
    <property type="method" value="EM"/>
    <property type="resolution" value="2.84 A"/>
    <property type="chains" value="A=1-751"/>
</dbReference>
<dbReference type="PDB" id="7DZ8">
    <property type="method" value="EM"/>
    <property type="resolution" value="3.16 A"/>
    <property type="chains" value="A=1-751"/>
</dbReference>
<dbReference type="PDB" id="7O01">
    <property type="method" value="EM"/>
    <property type="resolution" value="17.10 A"/>
    <property type="chains" value="A/a=11-751"/>
</dbReference>
<dbReference type="PDB" id="7R3K">
    <property type="method" value="EM"/>
    <property type="resolution" value="2.52 A"/>
    <property type="chains" value="A=1-751"/>
</dbReference>
<dbReference type="PDB" id="7WYI">
    <property type="method" value="EM"/>
    <property type="resolution" value="3.90 A"/>
    <property type="chains" value="A=1-751"/>
</dbReference>
<dbReference type="PDB" id="7WZN">
    <property type="method" value="EM"/>
    <property type="resolution" value="4.90 A"/>
    <property type="chains" value="A=1-751"/>
</dbReference>
<dbReference type="PDB" id="7ZQ9">
    <property type="method" value="EM"/>
    <property type="resolution" value="2.74 A"/>
    <property type="chains" value="A=1-751"/>
</dbReference>
<dbReference type="PDB" id="7ZQC">
    <property type="method" value="EM"/>
    <property type="resolution" value="2.31 A"/>
    <property type="chains" value="A=1-751"/>
</dbReference>
<dbReference type="PDB" id="7ZQD">
    <property type="method" value="EM"/>
    <property type="resolution" value="2.97 A"/>
    <property type="chains" value="A/A2=1-751"/>
</dbReference>
<dbReference type="PDB" id="8H2U">
    <property type="method" value="X-ray"/>
    <property type="resolution" value="3.40 A"/>
    <property type="chains" value="A=1-751"/>
</dbReference>
<dbReference type="PDBsum" id="6IJJ"/>
<dbReference type="PDBsum" id="6IJO"/>
<dbReference type="PDBsum" id="6JO5"/>
<dbReference type="PDBsum" id="6JO6"/>
<dbReference type="PDBsum" id="7BGI"/>
<dbReference type="PDBsum" id="7BLX"/>
<dbReference type="PDBsum" id="7D0J"/>
<dbReference type="PDBsum" id="7DZ7"/>
<dbReference type="PDBsum" id="7DZ8"/>
<dbReference type="PDBsum" id="7O01"/>
<dbReference type="PDBsum" id="7R3K"/>
<dbReference type="PDBsum" id="7WYI"/>
<dbReference type="PDBsum" id="7WZN"/>
<dbReference type="PDBsum" id="7ZQ9"/>
<dbReference type="PDBsum" id="7ZQC"/>
<dbReference type="PDBsum" id="7ZQD"/>
<dbReference type="PDBsum" id="8H2U"/>
<dbReference type="EMDB" id="EMD-12180"/>
<dbReference type="EMDB" id="EMD-12227"/>
<dbReference type="EMDB" id="EMD-12672"/>
<dbReference type="EMDB" id="EMD-14248"/>
<dbReference type="EMDB" id="EMD-14867"/>
<dbReference type="EMDB" id="EMD-14870"/>
<dbReference type="EMDB" id="EMD-14871"/>
<dbReference type="EMDB" id="EMD-30536"/>
<dbReference type="EMDB" id="EMD-30925"/>
<dbReference type="EMDB" id="EMD-30926"/>
<dbReference type="EMDB" id="EMD-32892"/>
<dbReference type="EMDB" id="EMD-32907"/>
<dbReference type="EMDB" id="EMD-9678"/>
<dbReference type="EMDB" id="EMD-9680"/>
<dbReference type="EMDB" id="EMD-9853"/>
<dbReference type="EMDB" id="EMD-9854"/>
<dbReference type="SMR" id="P12154"/>
<dbReference type="BioGRID" id="974757">
    <property type="interactions" value="2"/>
</dbReference>
<dbReference type="DIP" id="DIP-34985N"/>
<dbReference type="FunCoup" id="P12154">
    <property type="interactions" value="187"/>
</dbReference>
<dbReference type="IntAct" id="P12154">
    <property type="interactions" value="16"/>
</dbReference>
<dbReference type="STRING" id="3055.P12154"/>
<dbReference type="PaxDb" id="3055-DAA01471"/>
<dbReference type="GeneID" id="2717000"/>
<dbReference type="KEGG" id="cre:ChreCp019"/>
<dbReference type="eggNOG" id="ENOG502QRYE">
    <property type="taxonomic scope" value="Eukaryota"/>
</dbReference>
<dbReference type="HOGENOM" id="CLU_370334_0_0_1"/>
<dbReference type="InParanoid" id="P12154"/>
<dbReference type="BioCyc" id="CHLAMY:CHRECP019-MONOMER"/>
<dbReference type="BioCyc" id="MetaCyc:CHRECP019-MONOMER"/>
<dbReference type="BRENDA" id="1.97.1.12">
    <property type="organism ID" value="1318"/>
</dbReference>
<dbReference type="Proteomes" id="UP000006906">
    <property type="component" value="Chloroplast"/>
</dbReference>
<dbReference type="GO" id="GO:0009535">
    <property type="term" value="C:chloroplast thylakoid membrane"/>
    <property type="evidence" value="ECO:0007669"/>
    <property type="project" value="UniProtKB-SubCell"/>
</dbReference>
<dbReference type="GO" id="GO:0009522">
    <property type="term" value="C:photosystem I"/>
    <property type="evidence" value="ECO:0007669"/>
    <property type="project" value="UniProtKB-KW"/>
</dbReference>
<dbReference type="GO" id="GO:0051539">
    <property type="term" value="F:4 iron, 4 sulfur cluster binding"/>
    <property type="evidence" value="ECO:0007669"/>
    <property type="project" value="UniProtKB-KW"/>
</dbReference>
<dbReference type="GO" id="GO:0016168">
    <property type="term" value="F:chlorophyll binding"/>
    <property type="evidence" value="ECO:0007669"/>
    <property type="project" value="UniProtKB-KW"/>
</dbReference>
<dbReference type="GO" id="GO:0009055">
    <property type="term" value="F:electron transfer activity"/>
    <property type="evidence" value="ECO:0007669"/>
    <property type="project" value="UniProtKB-UniRule"/>
</dbReference>
<dbReference type="GO" id="GO:0000287">
    <property type="term" value="F:magnesium ion binding"/>
    <property type="evidence" value="ECO:0007669"/>
    <property type="project" value="UniProtKB-UniRule"/>
</dbReference>
<dbReference type="GO" id="GO:0016491">
    <property type="term" value="F:oxidoreductase activity"/>
    <property type="evidence" value="ECO:0007669"/>
    <property type="project" value="UniProtKB-KW"/>
</dbReference>
<dbReference type="GO" id="GO:0015979">
    <property type="term" value="P:photosynthesis"/>
    <property type="evidence" value="ECO:0007669"/>
    <property type="project" value="UniProtKB-UniRule"/>
</dbReference>
<dbReference type="FunFam" id="1.20.1130.10:FF:000001">
    <property type="entry name" value="Photosystem I P700 chlorophyll a apoprotein A2"/>
    <property type="match status" value="1"/>
</dbReference>
<dbReference type="Gene3D" id="1.20.1130.10">
    <property type="entry name" value="Photosystem I PsaA/PsaB"/>
    <property type="match status" value="1"/>
</dbReference>
<dbReference type="HAMAP" id="MF_00458">
    <property type="entry name" value="PSI_PsaA"/>
    <property type="match status" value="1"/>
</dbReference>
<dbReference type="InterPro" id="IPR006243">
    <property type="entry name" value="PSI_PsaA"/>
</dbReference>
<dbReference type="InterPro" id="IPR001280">
    <property type="entry name" value="PSI_PsaA/B"/>
</dbReference>
<dbReference type="InterPro" id="IPR020586">
    <property type="entry name" value="PSI_PsaA/B_CS"/>
</dbReference>
<dbReference type="InterPro" id="IPR036408">
    <property type="entry name" value="PSI_PsaA/B_sf"/>
</dbReference>
<dbReference type="NCBIfam" id="TIGR01335">
    <property type="entry name" value="psaA"/>
    <property type="match status" value="1"/>
</dbReference>
<dbReference type="PANTHER" id="PTHR30128">
    <property type="entry name" value="OUTER MEMBRANE PROTEIN, OMPA-RELATED"/>
    <property type="match status" value="1"/>
</dbReference>
<dbReference type="PANTHER" id="PTHR30128:SF19">
    <property type="entry name" value="PHOTOSYSTEM I P700 CHLOROPHYLL A APOPROTEIN A1-RELATED"/>
    <property type="match status" value="1"/>
</dbReference>
<dbReference type="Pfam" id="PF00223">
    <property type="entry name" value="PsaA_PsaB"/>
    <property type="match status" value="1"/>
</dbReference>
<dbReference type="PIRSF" id="PIRSF002905">
    <property type="entry name" value="PSI_A"/>
    <property type="match status" value="1"/>
</dbReference>
<dbReference type="PRINTS" id="PR00257">
    <property type="entry name" value="PHOTSYSPSAAB"/>
</dbReference>
<dbReference type="SUPFAM" id="SSF81558">
    <property type="entry name" value="Photosystem I subunits PsaA/PsaB"/>
    <property type="match status" value="1"/>
</dbReference>
<dbReference type="PROSITE" id="PS00419">
    <property type="entry name" value="PHOTOSYSTEM_I_PSAAB"/>
    <property type="match status" value="1"/>
</dbReference>
<name>PSAA_CHLRE</name>
<reference key="1">
    <citation type="journal article" date="1987" name="EMBO J.">
        <title>Structural and transcription analysis of two homologous genes for the P700 chlorophyll a-apoproteins in Chlamydomonas reinhardtii: evidence for in vivo trans-splicing.</title>
        <authorList>
            <person name="Kueck U."/>
            <person name="Choquet Y."/>
            <person name="Schneider M."/>
            <person name="Dron M."/>
            <person name="Bennoun P."/>
        </authorList>
    </citation>
    <scope>NUCLEOTIDE SEQUENCE [GENOMIC DNA]</scope>
    <source>
        <strain>CC-406</strain>
    </source>
</reference>
<reference key="2">
    <citation type="journal article" date="2009" name="BMC Evol. Biol.">
        <title>Nucleotide diversity of the Chlamydomonas reinhardtii plastid genome: addressing the mutational-hazard hypothesis.</title>
        <authorList>
            <person name="Smith D.R."/>
            <person name="Lee R.W."/>
        </authorList>
    </citation>
    <scope>NUCLEOTIDE SEQUENCE [LARGE SCALE GENOMIC DNA]</scope>
    <source>
        <strain>CC-503</strain>
    </source>
</reference>
<reference key="3">
    <citation type="journal article" date="2000" name="Mol. Phylogenet. Evol.">
        <title>Origin and evolution of the colonial Volvocales (Chlorophyceae) as inferred from multiple, chloroplast gene sequences.</title>
        <authorList>
            <person name="Nozaki H."/>
            <person name="Misawa K."/>
            <person name="Kajita T."/>
            <person name="Kato M."/>
            <person name="Nohara S."/>
            <person name="Watanabe M.M."/>
        </authorList>
    </citation>
    <scope>NUCLEOTIDE SEQUENCE [GENOMIC DNA] OF 190-686</scope>
    <source>
        <strain>137c / CC-125</strain>
    </source>
</reference>
<reference key="4">
    <citation type="unpublished observations" date="2001-04">
        <authorList>
            <person name="Redding K."/>
        </authorList>
    </citation>
    <scope>NUCLEOTIDE SEQUENCE [GENOMIC DNA] OF 513-517</scope>
    <source>
        <strain>137c / CC-125</strain>
    </source>
</reference>
<reference key="5">
    <citation type="journal article" date="2002" name="Plant Cell">
        <title>The Chlamydomonas reinhardtii plastid chromosome: islands of genes in a sea of repeats.</title>
        <authorList>
            <person name="Maul J.E."/>
            <person name="Lilly J.W."/>
            <person name="Cui L."/>
            <person name="dePamphilis C.W."/>
            <person name="Miller W."/>
            <person name="Harris E.H."/>
            <person name="Stern D.B."/>
        </authorList>
    </citation>
    <scope>IDENTIFICATION</scope>
    <scope>COMPLETE PLASTID GENOME</scope>
</reference>
<reference key="6">
    <citation type="journal article" date="1998" name="EMBO J.">
        <title>A systematic survey of conserved histidines in the core subunits of photosystem I by site-directed mutagenesis reveals the likely axial ligands of P700.</title>
        <authorList>
            <person name="Redding K."/>
            <person name="MacMillan F."/>
            <person name="Leibl W."/>
            <person name="Brettel K."/>
            <person name="Hanley J."/>
            <person name="Rutherford A.W."/>
            <person name="Breton J."/>
            <person name="Rochaix J.-D."/>
        </authorList>
    </citation>
    <scope>MUTAGENESIS OF CONSERVED HISTIDINES</scope>
    <source>
        <strain>137c / CC-125</strain>
    </source>
</reference>
<reference key="7">
    <citation type="journal article" date="2000" name="Biochemistry">
        <title>Influence of the axial ligands on the spectral properties of P700 of photosystem I: a study of site-directed mutants.</title>
        <authorList>
            <person name="Krabben L."/>
            <person name="Schlodder E."/>
            <person name="Jordan R."/>
            <person name="Carbonera D."/>
            <person name="Giacometti G."/>
            <person name="Lee H."/>
            <person name="Webber A.N."/>
            <person name="Lubitz W."/>
        </authorList>
    </citation>
    <scope>MUTAGENESIS OF HIS-676</scope>
    <source>
        <strain>CC-2696</strain>
    </source>
</reference>
<reference key="8">
    <citation type="journal article" date="2001" name="Proc. Natl. Acad. Sci. U.S.A.">
        <title>Evidence for two active branches for electron transfer in photosystem I.</title>
        <authorList>
            <person name="Guergova-Kuras M."/>
            <person name="Boudreaux B."/>
            <person name="Joliot A."/>
            <person name="Joliot P."/>
            <person name="Redding K."/>
        </authorList>
    </citation>
    <scope>MUTAGENESIS OF A1 PHYLLOQUINONE LIGANDS</scope>
    <source>
        <strain>137c / CC-125</strain>
    </source>
</reference>
<reference key="9">
    <citation type="journal article" date="2001" name="J. Biol. Chem.">
        <title>Mutations in both sides of the photosystem I reaction center identify the phylloquinone observed by electron paramagnetic resonance spectroscopy.</title>
        <authorList>
            <person name="Boudreaux B."/>
            <person name="MacMillan F."/>
            <person name="Teutloff C."/>
            <person name="Agalarov R."/>
            <person name="Gu F."/>
            <person name="Grimaldi S."/>
            <person name="Bittl R."/>
            <person name="Brettel K."/>
            <person name="Redding K."/>
        </authorList>
    </citation>
    <scope>MUTAGENESIS OF A1 PHYLLOQUINONE LIGANDS</scope>
    <source>
        <strain>137c / CC-125</strain>
    </source>
</reference>
<reference key="10">
    <citation type="journal article" date="2003" name="Eur. J. Biochem.">
        <title>Reversed-phase HPLC determination of chlorophyll a' and phylloquinone in photosystem I of oxygenic photosynthetic organisms.</title>
        <authorList>
            <person name="Nakamura A."/>
            <person name="Akai M."/>
            <person name="Yoshida E."/>
            <person name="Taki T."/>
            <person name="Watanabe T."/>
        </authorList>
    </citation>
    <scope>PRESENCE OF CHLOROPHYLL A' IN PSI</scope>
    <source>
        <strain>IAM C-9</strain>
    </source>
</reference>
<geneLocation type="chloroplast"/>
<keyword id="KW-0002">3D-structure</keyword>
<keyword id="KW-0004">4Fe-4S</keyword>
<keyword id="KW-0148">Chlorophyll</keyword>
<keyword id="KW-0150">Chloroplast</keyword>
<keyword id="KW-0157">Chromophore</keyword>
<keyword id="KW-0249">Electron transport</keyword>
<keyword id="KW-0408">Iron</keyword>
<keyword id="KW-0411">Iron-sulfur</keyword>
<keyword id="KW-0460">Magnesium</keyword>
<keyword id="KW-0472">Membrane</keyword>
<keyword id="KW-0479">Metal-binding</keyword>
<keyword id="KW-0560">Oxidoreductase</keyword>
<keyword id="KW-0602">Photosynthesis</keyword>
<keyword id="KW-0603">Photosystem I</keyword>
<keyword id="KW-0934">Plastid</keyword>
<keyword id="KW-1185">Reference proteome</keyword>
<keyword id="KW-0793">Thylakoid</keyword>
<keyword id="KW-0812">Transmembrane</keyword>
<keyword id="KW-1133">Transmembrane helix</keyword>
<keyword id="KW-0813">Transport</keyword>
<protein>
    <recommendedName>
        <fullName>Photosystem I P700 chlorophyll a apoprotein A1</fullName>
        <ecNumber>1.97.1.12</ecNumber>
    </recommendedName>
    <alternativeName>
        <fullName>PSI-A</fullName>
    </alternativeName>
    <alternativeName>
        <fullName>PsaA</fullName>
    </alternativeName>
</protein>